<feature type="chain" id="PRO_0000267016" description="Enolase">
    <location>
        <begin position="1"/>
        <end position="437"/>
    </location>
</feature>
<feature type="active site" description="Proton donor" evidence="1">
    <location>
        <position position="204"/>
    </location>
</feature>
<feature type="active site" description="Proton acceptor" evidence="1">
    <location>
        <position position="349"/>
    </location>
</feature>
<feature type="binding site" evidence="1">
    <location>
        <position position="162"/>
    </location>
    <ligand>
        <name>(2R)-2-phosphoglycerate</name>
        <dbReference type="ChEBI" id="CHEBI:58289"/>
    </ligand>
</feature>
<feature type="binding site" evidence="1">
    <location>
        <position position="251"/>
    </location>
    <ligand>
        <name>Mg(2+)</name>
        <dbReference type="ChEBI" id="CHEBI:18420"/>
    </ligand>
</feature>
<feature type="binding site" evidence="1">
    <location>
        <position position="297"/>
    </location>
    <ligand>
        <name>Mg(2+)</name>
        <dbReference type="ChEBI" id="CHEBI:18420"/>
    </ligand>
</feature>
<feature type="binding site" evidence="1">
    <location>
        <position position="324"/>
    </location>
    <ligand>
        <name>Mg(2+)</name>
        <dbReference type="ChEBI" id="CHEBI:18420"/>
    </ligand>
</feature>
<feature type="binding site" evidence="1">
    <location>
        <position position="349"/>
    </location>
    <ligand>
        <name>(2R)-2-phosphoglycerate</name>
        <dbReference type="ChEBI" id="CHEBI:58289"/>
    </ligand>
</feature>
<feature type="binding site" evidence="1">
    <location>
        <position position="378"/>
    </location>
    <ligand>
        <name>(2R)-2-phosphoglycerate</name>
        <dbReference type="ChEBI" id="CHEBI:58289"/>
    </ligand>
</feature>
<feature type="binding site" evidence="1">
    <location>
        <position position="379"/>
    </location>
    <ligand>
        <name>(2R)-2-phosphoglycerate</name>
        <dbReference type="ChEBI" id="CHEBI:58289"/>
    </ligand>
</feature>
<feature type="binding site" evidence="1">
    <location>
        <position position="400"/>
    </location>
    <ligand>
        <name>(2R)-2-phosphoglycerate</name>
        <dbReference type="ChEBI" id="CHEBI:58289"/>
    </ligand>
</feature>
<comment type="function">
    <text evidence="1">Catalyzes the reversible conversion of 2-phosphoglycerate (2-PG) into phosphoenolpyruvate (PEP). It is essential for the degradation of carbohydrates via glycolysis.</text>
</comment>
<comment type="catalytic activity">
    <reaction evidence="1">
        <text>(2R)-2-phosphoglycerate = phosphoenolpyruvate + H2O</text>
        <dbReference type="Rhea" id="RHEA:10164"/>
        <dbReference type="ChEBI" id="CHEBI:15377"/>
        <dbReference type="ChEBI" id="CHEBI:58289"/>
        <dbReference type="ChEBI" id="CHEBI:58702"/>
        <dbReference type="EC" id="4.2.1.11"/>
    </reaction>
</comment>
<comment type="cofactor">
    <cofactor evidence="1">
        <name>Mg(2+)</name>
        <dbReference type="ChEBI" id="CHEBI:18420"/>
    </cofactor>
    <text evidence="1">Binds a second Mg(2+) ion via substrate during catalysis.</text>
</comment>
<comment type="pathway">
    <text evidence="1">Carbohydrate degradation; glycolysis; pyruvate from D-glyceraldehyde 3-phosphate: step 4/5.</text>
</comment>
<comment type="subcellular location">
    <subcellularLocation>
        <location evidence="1">Cytoplasm</location>
    </subcellularLocation>
    <subcellularLocation>
        <location evidence="1">Secreted</location>
    </subcellularLocation>
    <subcellularLocation>
        <location evidence="1">Cell surface</location>
    </subcellularLocation>
    <text evidence="1">Fractions of enolase are present in both the cytoplasm and on the cell surface.</text>
</comment>
<comment type="similarity">
    <text evidence="1">Belongs to the enolase family.</text>
</comment>
<evidence type="ECO:0000255" key="1">
    <source>
        <dbReference type="HAMAP-Rule" id="MF_00318"/>
    </source>
</evidence>
<reference key="1">
    <citation type="submission" date="2005-08" db="EMBL/GenBank/DDBJ databases">
        <title>Complete sequence of Chlorobium chlorochromatii CaD3.</title>
        <authorList>
            <consortium name="US DOE Joint Genome Institute"/>
            <person name="Copeland A."/>
            <person name="Lucas S."/>
            <person name="Lapidus A."/>
            <person name="Barry K."/>
            <person name="Detter J.C."/>
            <person name="Glavina T."/>
            <person name="Hammon N."/>
            <person name="Israni S."/>
            <person name="Pitluck S."/>
            <person name="Bryant D."/>
            <person name="Schmutz J."/>
            <person name="Larimer F."/>
            <person name="Land M."/>
            <person name="Kyrpides N."/>
            <person name="Ivanova N."/>
            <person name="Richardson P."/>
        </authorList>
    </citation>
    <scope>NUCLEOTIDE SEQUENCE [LARGE SCALE GENOMIC DNA]</scope>
    <source>
        <strain>CaD3</strain>
    </source>
</reference>
<sequence>MPIISKVVARQILDSRGNPTVEVDVYTESSFGRAAVPSGASTGVHEAVELRDGDASVYLGKGVLKAVENVNTVISDALEGMLVTEQEEIDEMLLALDGTPNKSNLGANALLGVSLACARAGAEYTGLPLYRYIGGTMANTLPVPMMNVLNGGAHADNTVDFQEFMIMPAGFTSFSDALRAGAEIFHSLKALLKSKGLSTAVGDEGGFAPNLRSNEEAIELVIEAIGKAGYKVGSPTDKGGLGDAQVMIALDPASSEFYDAAKKRYVFKKSSKQELTSTEMAEYWERWVNTYPIISIEDGMAEDDWEGWKLLTDKVGSRVQLVGDDLFVTNSIRLADGINRKVANSILIKVNQIGTLTETLQAINLARLNGYTSVISHRSGETEDSTIAQIAVATNAGQIKTGSMSRSDRMAKYNELLRIEEELGSQARYPGKAAFRV</sequence>
<gene>
    <name evidence="1" type="primary">eno</name>
    <name type="ordered locus">Cag_0347</name>
</gene>
<dbReference type="EC" id="4.2.1.11" evidence="1"/>
<dbReference type="EMBL" id="CP000108">
    <property type="protein sequence ID" value="ABB27620.1"/>
    <property type="molecule type" value="Genomic_DNA"/>
</dbReference>
<dbReference type="SMR" id="Q3ATQ5"/>
<dbReference type="STRING" id="340177.Cag_0347"/>
<dbReference type="KEGG" id="cch:Cag_0347"/>
<dbReference type="eggNOG" id="COG0148">
    <property type="taxonomic scope" value="Bacteria"/>
</dbReference>
<dbReference type="HOGENOM" id="CLU_031223_2_1_10"/>
<dbReference type="OrthoDB" id="9804716at2"/>
<dbReference type="UniPathway" id="UPA00109">
    <property type="reaction ID" value="UER00187"/>
</dbReference>
<dbReference type="GO" id="GO:0009986">
    <property type="term" value="C:cell surface"/>
    <property type="evidence" value="ECO:0007669"/>
    <property type="project" value="UniProtKB-SubCell"/>
</dbReference>
<dbReference type="GO" id="GO:0005576">
    <property type="term" value="C:extracellular region"/>
    <property type="evidence" value="ECO:0007669"/>
    <property type="project" value="UniProtKB-SubCell"/>
</dbReference>
<dbReference type="GO" id="GO:0000015">
    <property type="term" value="C:phosphopyruvate hydratase complex"/>
    <property type="evidence" value="ECO:0007669"/>
    <property type="project" value="InterPro"/>
</dbReference>
<dbReference type="GO" id="GO:0000287">
    <property type="term" value="F:magnesium ion binding"/>
    <property type="evidence" value="ECO:0007669"/>
    <property type="project" value="UniProtKB-UniRule"/>
</dbReference>
<dbReference type="GO" id="GO:0004634">
    <property type="term" value="F:phosphopyruvate hydratase activity"/>
    <property type="evidence" value="ECO:0007669"/>
    <property type="project" value="UniProtKB-UniRule"/>
</dbReference>
<dbReference type="GO" id="GO:0006096">
    <property type="term" value="P:glycolytic process"/>
    <property type="evidence" value="ECO:0007669"/>
    <property type="project" value="UniProtKB-UniRule"/>
</dbReference>
<dbReference type="CDD" id="cd03313">
    <property type="entry name" value="enolase"/>
    <property type="match status" value="1"/>
</dbReference>
<dbReference type="FunFam" id="3.20.20.120:FF:000001">
    <property type="entry name" value="Enolase"/>
    <property type="match status" value="1"/>
</dbReference>
<dbReference type="FunFam" id="3.30.390.10:FF:000001">
    <property type="entry name" value="Enolase"/>
    <property type="match status" value="1"/>
</dbReference>
<dbReference type="Gene3D" id="3.20.20.120">
    <property type="entry name" value="Enolase-like C-terminal domain"/>
    <property type="match status" value="1"/>
</dbReference>
<dbReference type="Gene3D" id="3.30.390.10">
    <property type="entry name" value="Enolase-like, N-terminal domain"/>
    <property type="match status" value="1"/>
</dbReference>
<dbReference type="HAMAP" id="MF_00318">
    <property type="entry name" value="Enolase"/>
    <property type="match status" value="1"/>
</dbReference>
<dbReference type="InterPro" id="IPR000941">
    <property type="entry name" value="Enolase"/>
</dbReference>
<dbReference type="InterPro" id="IPR036849">
    <property type="entry name" value="Enolase-like_C_sf"/>
</dbReference>
<dbReference type="InterPro" id="IPR029017">
    <property type="entry name" value="Enolase-like_N"/>
</dbReference>
<dbReference type="InterPro" id="IPR020810">
    <property type="entry name" value="Enolase_C"/>
</dbReference>
<dbReference type="InterPro" id="IPR020809">
    <property type="entry name" value="Enolase_CS"/>
</dbReference>
<dbReference type="InterPro" id="IPR020811">
    <property type="entry name" value="Enolase_N"/>
</dbReference>
<dbReference type="NCBIfam" id="TIGR01060">
    <property type="entry name" value="eno"/>
    <property type="match status" value="1"/>
</dbReference>
<dbReference type="PANTHER" id="PTHR11902">
    <property type="entry name" value="ENOLASE"/>
    <property type="match status" value="1"/>
</dbReference>
<dbReference type="PANTHER" id="PTHR11902:SF1">
    <property type="entry name" value="ENOLASE"/>
    <property type="match status" value="1"/>
</dbReference>
<dbReference type="Pfam" id="PF00113">
    <property type="entry name" value="Enolase_C"/>
    <property type="match status" value="1"/>
</dbReference>
<dbReference type="Pfam" id="PF03952">
    <property type="entry name" value="Enolase_N"/>
    <property type="match status" value="1"/>
</dbReference>
<dbReference type="PIRSF" id="PIRSF001400">
    <property type="entry name" value="Enolase"/>
    <property type="match status" value="1"/>
</dbReference>
<dbReference type="PRINTS" id="PR00148">
    <property type="entry name" value="ENOLASE"/>
</dbReference>
<dbReference type="SFLD" id="SFLDS00001">
    <property type="entry name" value="Enolase"/>
    <property type="match status" value="1"/>
</dbReference>
<dbReference type="SFLD" id="SFLDF00002">
    <property type="entry name" value="enolase"/>
    <property type="match status" value="1"/>
</dbReference>
<dbReference type="SMART" id="SM01192">
    <property type="entry name" value="Enolase_C"/>
    <property type="match status" value="1"/>
</dbReference>
<dbReference type="SMART" id="SM01193">
    <property type="entry name" value="Enolase_N"/>
    <property type="match status" value="1"/>
</dbReference>
<dbReference type="SUPFAM" id="SSF51604">
    <property type="entry name" value="Enolase C-terminal domain-like"/>
    <property type="match status" value="1"/>
</dbReference>
<dbReference type="SUPFAM" id="SSF54826">
    <property type="entry name" value="Enolase N-terminal domain-like"/>
    <property type="match status" value="1"/>
</dbReference>
<dbReference type="PROSITE" id="PS00164">
    <property type="entry name" value="ENOLASE"/>
    <property type="match status" value="1"/>
</dbReference>
<accession>Q3ATQ5</accession>
<protein>
    <recommendedName>
        <fullName evidence="1">Enolase</fullName>
        <ecNumber evidence="1">4.2.1.11</ecNumber>
    </recommendedName>
    <alternativeName>
        <fullName evidence="1">2-phospho-D-glycerate hydro-lyase</fullName>
    </alternativeName>
    <alternativeName>
        <fullName evidence="1">2-phosphoglycerate dehydratase</fullName>
    </alternativeName>
</protein>
<keyword id="KW-0963">Cytoplasm</keyword>
<keyword id="KW-0324">Glycolysis</keyword>
<keyword id="KW-0456">Lyase</keyword>
<keyword id="KW-0460">Magnesium</keyword>
<keyword id="KW-0479">Metal-binding</keyword>
<keyword id="KW-0964">Secreted</keyword>
<name>ENO_CHLCH</name>
<organism>
    <name type="scientific">Chlorobium chlorochromatii (strain CaD3)</name>
    <dbReference type="NCBI Taxonomy" id="340177"/>
    <lineage>
        <taxon>Bacteria</taxon>
        <taxon>Pseudomonadati</taxon>
        <taxon>Chlorobiota</taxon>
        <taxon>Chlorobiia</taxon>
        <taxon>Chlorobiales</taxon>
        <taxon>Chlorobiaceae</taxon>
        <taxon>Chlorobium/Pelodictyon group</taxon>
        <taxon>Chlorobium</taxon>
    </lineage>
</organism>
<proteinExistence type="inferred from homology"/>